<sequence length="72" mass="8288">MTKEEAIEVDGVVKEALPNTTFRVQLQNGHEILAYLSGRMRKHYIRIVPGDSVKVALSPYDLSRGRIMFRER</sequence>
<evidence type="ECO:0000255" key="1">
    <source>
        <dbReference type="HAMAP-Rule" id="MF_00075"/>
    </source>
</evidence>
<reference key="1">
    <citation type="journal article" date="1998" name="Science">
        <title>Complete genome sequence of Treponema pallidum, the syphilis spirochete.</title>
        <authorList>
            <person name="Fraser C.M."/>
            <person name="Norris S.J."/>
            <person name="Weinstock G.M."/>
            <person name="White O."/>
            <person name="Sutton G.G."/>
            <person name="Dodson R.J."/>
            <person name="Gwinn M.L."/>
            <person name="Hickey E.K."/>
            <person name="Clayton R.A."/>
            <person name="Ketchum K.A."/>
            <person name="Sodergren E."/>
            <person name="Hardham J.M."/>
            <person name="McLeod M.P."/>
            <person name="Salzberg S.L."/>
            <person name="Peterson J.D."/>
            <person name="Khalak H.G."/>
            <person name="Richardson D.L."/>
            <person name="Howell J.K."/>
            <person name="Chidambaram M."/>
            <person name="Utterback T.R."/>
            <person name="McDonald L.A."/>
            <person name="Artiach P."/>
            <person name="Bowman C."/>
            <person name="Cotton M.D."/>
            <person name="Fujii C."/>
            <person name="Garland S.A."/>
            <person name="Hatch B."/>
            <person name="Horst K."/>
            <person name="Roberts K.M."/>
            <person name="Sandusky M."/>
            <person name="Weidman J.F."/>
            <person name="Smith H.O."/>
            <person name="Venter J.C."/>
        </authorList>
    </citation>
    <scope>NUCLEOTIDE SEQUENCE [LARGE SCALE GENOMIC DNA]</scope>
    <source>
        <strain>Nichols</strain>
    </source>
</reference>
<gene>
    <name evidence="1" type="primary">infA</name>
    <name type="ordered locus">TP_0097</name>
</gene>
<name>IF1_TREPA</name>
<keyword id="KW-0963">Cytoplasm</keyword>
<keyword id="KW-0396">Initiation factor</keyword>
<keyword id="KW-0648">Protein biosynthesis</keyword>
<keyword id="KW-1185">Reference proteome</keyword>
<keyword id="KW-0694">RNA-binding</keyword>
<keyword id="KW-0699">rRNA-binding</keyword>
<protein>
    <recommendedName>
        <fullName evidence="1">Translation initiation factor IF-1</fullName>
    </recommendedName>
</protein>
<comment type="function">
    <text evidence="1">One of the essential components for the initiation of protein synthesis. Stabilizes the binding of IF-2 and IF-3 on the 30S subunit to which N-formylmethionyl-tRNA(fMet) subsequently binds. Helps modulate mRNA selection, yielding the 30S pre-initiation complex (PIC). Upon addition of the 50S ribosomal subunit IF-1, IF-2 and IF-3 are released leaving the mature 70S translation initiation complex.</text>
</comment>
<comment type="subunit">
    <text evidence="1">Component of the 30S ribosomal translation pre-initiation complex which assembles on the 30S ribosome in the order IF-2 and IF-3, IF-1 and N-formylmethionyl-tRNA(fMet); mRNA recruitment can occur at any time during PIC assembly.</text>
</comment>
<comment type="subcellular location">
    <subcellularLocation>
        <location evidence="1">Cytoplasm</location>
    </subcellularLocation>
</comment>
<comment type="similarity">
    <text evidence="1">Belongs to the IF-1 family.</text>
</comment>
<dbReference type="EMBL" id="AE000520">
    <property type="protein sequence ID" value="AAC65092.1"/>
    <property type="molecule type" value="Genomic_DNA"/>
</dbReference>
<dbReference type="PIR" id="E71366">
    <property type="entry name" value="E71366"/>
</dbReference>
<dbReference type="RefSeq" id="WP_010881546.1">
    <property type="nucleotide sequence ID" value="NC_021490.2"/>
</dbReference>
<dbReference type="SMR" id="O83135"/>
<dbReference type="IntAct" id="O83135">
    <property type="interactions" value="43"/>
</dbReference>
<dbReference type="STRING" id="243276.TP_0097"/>
<dbReference type="EnsemblBacteria" id="AAC65092">
    <property type="protein sequence ID" value="AAC65092"/>
    <property type="gene ID" value="TP_0097"/>
</dbReference>
<dbReference type="GeneID" id="93875891"/>
<dbReference type="KEGG" id="tpa:TP_0097"/>
<dbReference type="KEGG" id="tpw:TPANIC_0097"/>
<dbReference type="eggNOG" id="COG0361">
    <property type="taxonomic scope" value="Bacteria"/>
</dbReference>
<dbReference type="HOGENOM" id="CLU_151267_1_0_12"/>
<dbReference type="OrthoDB" id="9803250at2"/>
<dbReference type="Proteomes" id="UP000000811">
    <property type="component" value="Chromosome"/>
</dbReference>
<dbReference type="GO" id="GO:0005829">
    <property type="term" value="C:cytosol"/>
    <property type="evidence" value="ECO:0007669"/>
    <property type="project" value="TreeGrafter"/>
</dbReference>
<dbReference type="GO" id="GO:0043022">
    <property type="term" value="F:ribosome binding"/>
    <property type="evidence" value="ECO:0007669"/>
    <property type="project" value="UniProtKB-UniRule"/>
</dbReference>
<dbReference type="GO" id="GO:0019843">
    <property type="term" value="F:rRNA binding"/>
    <property type="evidence" value="ECO:0007669"/>
    <property type="project" value="UniProtKB-UniRule"/>
</dbReference>
<dbReference type="GO" id="GO:0003743">
    <property type="term" value="F:translation initiation factor activity"/>
    <property type="evidence" value="ECO:0007669"/>
    <property type="project" value="UniProtKB-UniRule"/>
</dbReference>
<dbReference type="CDD" id="cd04451">
    <property type="entry name" value="S1_IF1"/>
    <property type="match status" value="1"/>
</dbReference>
<dbReference type="FunFam" id="2.40.50.140:FF:000002">
    <property type="entry name" value="Translation initiation factor IF-1"/>
    <property type="match status" value="1"/>
</dbReference>
<dbReference type="Gene3D" id="2.40.50.140">
    <property type="entry name" value="Nucleic acid-binding proteins"/>
    <property type="match status" value="1"/>
</dbReference>
<dbReference type="HAMAP" id="MF_00075">
    <property type="entry name" value="IF_1"/>
    <property type="match status" value="1"/>
</dbReference>
<dbReference type="InterPro" id="IPR012340">
    <property type="entry name" value="NA-bd_OB-fold"/>
</dbReference>
<dbReference type="InterPro" id="IPR006196">
    <property type="entry name" value="RNA-binding_domain_S1_IF1"/>
</dbReference>
<dbReference type="InterPro" id="IPR003029">
    <property type="entry name" value="S1_domain"/>
</dbReference>
<dbReference type="InterPro" id="IPR004368">
    <property type="entry name" value="TIF_IF1"/>
</dbReference>
<dbReference type="NCBIfam" id="TIGR00008">
    <property type="entry name" value="infA"/>
    <property type="match status" value="1"/>
</dbReference>
<dbReference type="PANTHER" id="PTHR33370">
    <property type="entry name" value="TRANSLATION INITIATION FACTOR IF-1, CHLOROPLASTIC"/>
    <property type="match status" value="1"/>
</dbReference>
<dbReference type="PANTHER" id="PTHR33370:SF1">
    <property type="entry name" value="TRANSLATION INITIATION FACTOR IF-1, CHLOROPLASTIC"/>
    <property type="match status" value="1"/>
</dbReference>
<dbReference type="Pfam" id="PF01176">
    <property type="entry name" value="eIF-1a"/>
    <property type="match status" value="1"/>
</dbReference>
<dbReference type="SMART" id="SM00316">
    <property type="entry name" value="S1"/>
    <property type="match status" value="1"/>
</dbReference>
<dbReference type="SUPFAM" id="SSF50249">
    <property type="entry name" value="Nucleic acid-binding proteins"/>
    <property type="match status" value="1"/>
</dbReference>
<dbReference type="PROSITE" id="PS50832">
    <property type="entry name" value="S1_IF1_TYPE"/>
    <property type="match status" value="1"/>
</dbReference>
<accession>O83135</accession>
<proteinExistence type="inferred from homology"/>
<organism>
    <name type="scientific">Treponema pallidum (strain Nichols)</name>
    <dbReference type="NCBI Taxonomy" id="243276"/>
    <lineage>
        <taxon>Bacteria</taxon>
        <taxon>Pseudomonadati</taxon>
        <taxon>Spirochaetota</taxon>
        <taxon>Spirochaetia</taxon>
        <taxon>Spirochaetales</taxon>
        <taxon>Treponemataceae</taxon>
        <taxon>Treponema</taxon>
    </lineage>
</organism>
<feature type="chain" id="PRO_0000095897" description="Translation initiation factor IF-1">
    <location>
        <begin position="1"/>
        <end position="72"/>
    </location>
</feature>
<feature type="domain" description="S1-like" evidence="1">
    <location>
        <begin position="1"/>
        <end position="72"/>
    </location>
</feature>